<evidence type="ECO:0000250" key="1">
    <source>
        <dbReference type="UniProtKB" id="Q9BR39"/>
    </source>
</evidence>
<evidence type="ECO:0000250" key="2">
    <source>
        <dbReference type="UniProtKB" id="Q9ET78"/>
    </source>
</evidence>
<evidence type="ECO:0000255" key="3"/>
<evidence type="ECO:0000256" key="4">
    <source>
        <dbReference type="SAM" id="MobiDB-lite"/>
    </source>
</evidence>
<evidence type="ECO:0000305" key="5"/>
<evidence type="ECO:0000312" key="6">
    <source>
        <dbReference type="EMBL" id="ABC02402.1"/>
    </source>
</evidence>
<evidence type="ECO:0000312" key="7">
    <source>
        <dbReference type="RGD" id="1305196"/>
    </source>
</evidence>
<evidence type="ECO:0007744" key="8">
    <source>
    </source>
</evidence>
<gene>
    <name evidence="7" type="primary">Jph2</name>
    <name evidence="2" type="synonym">Jp2</name>
</gene>
<name>JPH2_RAT</name>
<keyword id="KW-1003">Cell membrane</keyword>
<keyword id="KW-0217">Developmental protein</keyword>
<keyword id="KW-0238">DNA-binding</keyword>
<keyword id="KW-0256">Endoplasmic reticulum</keyword>
<keyword id="KW-0472">Membrane</keyword>
<keyword id="KW-0539">Nucleus</keyword>
<keyword id="KW-0597">Phosphoprotein</keyword>
<keyword id="KW-1185">Reference proteome</keyword>
<keyword id="KW-0677">Repeat</keyword>
<keyword id="KW-0678">Repressor</keyword>
<keyword id="KW-0703">Sarcoplasmic reticulum</keyword>
<keyword id="KW-0804">Transcription</keyword>
<keyword id="KW-0805">Transcription regulation</keyword>
<keyword id="KW-0812">Transmembrane</keyword>
<keyword id="KW-1133">Transmembrane helix</keyword>
<dbReference type="EMBL" id="DQ304564">
    <property type="protein sequence ID" value="ABC02402.1"/>
    <property type="molecule type" value="mRNA"/>
</dbReference>
<dbReference type="RefSeq" id="NP_001033063.1">
    <property type="nucleotide sequence ID" value="NM_001037974.2"/>
</dbReference>
<dbReference type="RefSeq" id="XP_006235588.1">
    <property type="nucleotide sequence ID" value="XM_006235526.3"/>
</dbReference>
<dbReference type="SMR" id="Q2PS20"/>
<dbReference type="BioGRID" id="255327">
    <property type="interactions" value="1"/>
</dbReference>
<dbReference type="FunCoup" id="Q2PS20">
    <property type="interactions" value="214"/>
</dbReference>
<dbReference type="IntAct" id="Q2PS20">
    <property type="interactions" value="2"/>
</dbReference>
<dbReference type="STRING" id="10116.ENSRNOP00000010938"/>
<dbReference type="GlyGen" id="Q2PS20">
    <property type="glycosylation" value="2 sites"/>
</dbReference>
<dbReference type="iPTMnet" id="Q2PS20"/>
<dbReference type="PhosphoSitePlus" id="Q2PS20"/>
<dbReference type="PaxDb" id="10116-ENSRNOP00000010938"/>
<dbReference type="Ensembl" id="ENSRNOT00000010939.6">
    <property type="protein sequence ID" value="ENSRNOP00000010938.2"/>
    <property type="gene ID" value="ENSRNOG00000008170.6"/>
</dbReference>
<dbReference type="GeneID" id="296345"/>
<dbReference type="KEGG" id="rno:296345"/>
<dbReference type="UCSC" id="RGD:1305196">
    <property type="organism name" value="rat"/>
</dbReference>
<dbReference type="AGR" id="RGD:1305196"/>
<dbReference type="CTD" id="57158"/>
<dbReference type="RGD" id="1305196">
    <property type="gene designation" value="Jph2"/>
</dbReference>
<dbReference type="eggNOG" id="KOG0231">
    <property type="taxonomic scope" value="Eukaryota"/>
</dbReference>
<dbReference type="GeneTree" id="ENSGT00940000159411"/>
<dbReference type="HOGENOM" id="CLU_008078_1_0_1"/>
<dbReference type="InParanoid" id="Q2PS20"/>
<dbReference type="OMA" id="ECEEGPN"/>
<dbReference type="OrthoDB" id="284854at2759"/>
<dbReference type="PhylomeDB" id="Q2PS20"/>
<dbReference type="TreeFam" id="TF317210"/>
<dbReference type="PRO" id="PR:Q2PS20"/>
<dbReference type="Proteomes" id="UP000002494">
    <property type="component" value="Chromosome 3"/>
</dbReference>
<dbReference type="Bgee" id="ENSRNOG00000008170">
    <property type="expression patterns" value="Expressed in quadriceps femoris and 14 other cell types or tissues"/>
</dbReference>
<dbReference type="GO" id="GO:0005789">
    <property type="term" value="C:endoplasmic reticulum membrane"/>
    <property type="evidence" value="ECO:0000318"/>
    <property type="project" value="GO_Central"/>
</dbReference>
<dbReference type="GO" id="GO:0030314">
    <property type="term" value="C:junctional membrane complex"/>
    <property type="evidence" value="ECO:0000266"/>
    <property type="project" value="RGD"/>
</dbReference>
<dbReference type="GO" id="GO:0016020">
    <property type="term" value="C:membrane"/>
    <property type="evidence" value="ECO:0000266"/>
    <property type="project" value="RGD"/>
</dbReference>
<dbReference type="GO" id="GO:0005634">
    <property type="term" value="C:nucleus"/>
    <property type="evidence" value="ECO:0007669"/>
    <property type="project" value="UniProtKB-SubCell"/>
</dbReference>
<dbReference type="GO" id="GO:0005886">
    <property type="term" value="C:plasma membrane"/>
    <property type="evidence" value="ECO:0000318"/>
    <property type="project" value="GO_Central"/>
</dbReference>
<dbReference type="GO" id="GO:0016529">
    <property type="term" value="C:sarcoplasmic reticulum"/>
    <property type="evidence" value="ECO:0000266"/>
    <property type="project" value="RGD"/>
</dbReference>
<dbReference type="GO" id="GO:0033017">
    <property type="term" value="C:sarcoplasmic reticulum membrane"/>
    <property type="evidence" value="ECO:0007669"/>
    <property type="project" value="UniProtKB-SubCell"/>
</dbReference>
<dbReference type="GO" id="GO:0030018">
    <property type="term" value="C:Z disc"/>
    <property type="evidence" value="ECO:0000266"/>
    <property type="project" value="RGD"/>
</dbReference>
<dbReference type="GO" id="GO:0003677">
    <property type="term" value="F:DNA binding"/>
    <property type="evidence" value="ECO:0007669"/>
    <property type="project" value="UniProtKB-KW"/>
</dbReference>
<dbReference type="GO" id="GO:0070300">
    <property type="term" value="F:phosphatidic acid binding"/>
    <property type="evidence" value="ECO:0000250"/>
    <property type="project" value="UniProtKB"/>
</dbReference>
<dbReference type="GO" id="GO:0005547">
    <property type="term" value="F:phosphatidylinositol-3,4,5-trisphosphate binding"/>
    <property type="evidence" value="ECO:0000250"/>
    <property type="project" value="UniProtKB"/>
</dbReference>
<dbReference type="GO" id="GO:0080025">
    <property type="term" value="F:phosphatidylinositol-3,5-bisphosphate binding"/>
    <property type="evidence" value="ECO:0000250"/>
    <property type="project" value="UniProtKB"/>
</dbReference>
<dbReference type="GO" id="GO:0032266">
    <property type="term" value="F:phosphatidylinositol-3-phosphate binding"/>
    <property type="evidence" value="ECO:0000250"/>
    <property type="project" value="UniProtKB"/>
</dbReference>
<dbReference type="GO" id="GO:0005546">
    <property type="term" value="F:phosphatidylinositol-4,5-bisphosphate binding"/>
    <property type="evidence" value="ECO:0000250"/>
    <property type="project" value="UniProtKB"/>
</dbReference>
<dbReference type="GO" id="GO:0070273">
    <property type="term" value="F:phosphatidylinositol-4-phosphate binding"/>
    <property type="evidence" value="ECO:0000250"/>
    <property type="project" value="UniProtKB"/>
</dbReference>
<dbReference type="GO" id="GO:0010314">
    <property type="term" value="F:phosphatidylinositol-5-phosphate binding"/>
    <property type="evidence" value="ECO:0000250"/>
    <property type="project" value="UniProtKB"/>
</dbReference>
<dbReference type="GO" id="GO:0001786">
    <property type="term" value="F:phosphatidylserine binding"/>
    <property type="evidence" value="ECO:0000250"/>
    <property type="project" value="UniProtKB"/>
</dbReference>
<dbReference type="GO" id="GO:0055074">
    <property type="term" value="P:calcium ion homeostasis"/>
    <property type="evidence" value="ECO:0000266"/>
    <property type="project" value="RGD"/>
</dbReference>
<dbReference type="GO" id="GO:0007204">
    <property type="term" value="P:positive regulation of cytosolic calcium ion concentration"/>
    <property type="evidence" value="ECO:0000266"/>
    <property type="project" value="RGD"/>
</dbReference>
<dbReference type="GO" id="GO:0055024">
    <property type="term" value="P:regulation of cardiac muscle tissue development"/>
    <property type="evidence" value="ECO:0000266"/>
    <property type="project" value="RGD"/>
</dbReference>
<dbReference type="FunFam" id="2.20.110.10:FF:000001">
    <property type="entry name" value="Junctophilin"/>
    <property type="match status" value="1"/>
</dbReference>
<dbReference type="FunFam" id="2.20.110.10:FF:000003">
    <property type="entry name" value="Junctophilin"/>
    <property type="match status" value="1"/>
</dbReference>
<dbReference type="Gene3D" id="2.20.110.10">
    <property type="entry name" value="Histone H3 K4-specific methyltransferase SET7/9 N-terminal domain"/>
    <property type="match status" value="2"/>
</dbReference>
<dbReference type="InterPro" id="IPR017191">
    <property type="entry name" value="Junctophilin"/>
</dbReference>
<dbReference type="InterPro" id="IPR003409">
    <property type="entry name" value="MORN"/>
</dbReference>
<dbReference type="PANTHER" id="PTHR23085">
    <property type="entry name" value="GH28348P"/>
    <property type="match status" value="1"/>
</dbReference>
<dbReference type="PANTHER" id="PTHR23085:SF26">
    <property type="entry name" value="JUNCTOPHILIN-2"/>
    <property type="match status" value="1"/>
</dbReference>
<dbReference type="Pfam" id="PF02493">
    <property type="entry name" value="MORN"/>
    <property type="match status" value="8"/>
</dbReference>
<dbReference type="PIRSF" id="PIRSF037387">
    <property type="entry name" value="Junctophilin"/>
    <property type="match status" value="1"/>
</dbReference>
<dbReference type="SMART" id="SM00698">
    <property type="entry name" value="MORN"/>
    <property type="match status" value="6"/>
</dbReference>
<dbReference type="SUPFAM" id="SSF82185">
    <property type="entry name" value="Histone H3 K4-specific methyltransferase SET7/9 N-terminal domain"/>
    <property type="match status" value="3"/>
</dbReference>
<comment type="function">
    <molecule>Junctophilin-2</molecule>
    <text evidence="2">Membrane-binding protein that provides a structural bridge between the plasma membrane and the sarcoplasmic reticulum and is required for normal excitation-contraction coupling in cardiomyocytes. Provides a structural foundation for functional cross-talk between the cell surface and intracellular Ca(2+) release channels by maintaining the 12-15 nm gap between the sarcolemma and the sarcoplasmic reticulum membranes in the cardiac dyads. Necessary for proper intracellular Ca(2+) signaling in cardiac myocytes via its involvement in ryanodine receptor-mediated calcium ion release. Contributes to the construction of skeletal muscle triad junctions.</text>
</comment>
<comment type="function">
    <molecule>Junctophilin-2 N-terminal fragment</molecule>
    <text evidence="2">Transcription repressor required to safeguard against the deleterious effects of cardiac stress. Generated following cleavage of the Junctophilin-2 chain by calpain in response to cardiac stress in cardiomyocytes. Following cleavage and release from the membrane, translocates to the nucleus, binds DNA and represses expression of genes implicated in cell growth and differentiation, hypertrophy, inflammation and fibrosis. Modifies the transcription profile and thereby attenuates pathological remodeling in response to cardiac stress. Probably acts by competing with MEF2 transcription factors and TATA-binding proteins.</text>
</comment>
<comment type="subunit">
    <text evidence="1 2">Interacts with TRPC3 (By similarity). Interacts with BAG5 and HSPA8; the interaction with HSPA8 is increased in the presence of BAG5 (By similarity). Junctophilin-2 N-terminal fragment: Interacts with MEF2C (By similarity).</text>
</comment>
<comment type="subcellular location">
    <molecule>Junctophilin-2</molecule>
    <subcellularLocation>
        <location evidence="2">Cell membrane</location>
        <topology evidence="2">Peripheral membrane protein</topology>
    </subcellularLocation>
    <subcellularLocation>
        <location evidence="2">Sarcoplasmic reticulum membrane</location>
        <topology evidence="2">Single-pass type IV membrane protein</topology>
    </subcellularLocation>
    <subcellularLocation>
        <location evidence="2">Endoplasmic reticulum membrane</location>
        <topology evidence="2">Single-pass type IV membrane protein</topology>
    </subcellularLocation>
    <text evidence="2">The transmembrane domain is anchored in sarcoplasmic reticulum membrane, while the N-terminal part associates with the plasma membrane. In heart cells, it predominantly associates along Z lines within myocytes. In skeletal muscle, it is specifically localized at the junction of A and I bands.</text>
</comment>
<comment type="subcellular location">
    <molecule>Junctophilin-2 N-terminal fragment</molecule>
    <subcellularLocation>
        <location evidence="2">Nucleus</location>
    </subcellularLocation>
    <text evidence="2">Accumulates in the nucleus of stressed hearts.</text>
</comment>
<comment type="domain">
    <molecule>Junctophilin-2</molecule>
    <text evidence="1">The MORN (membrane occupation and recognition nexus) repeats contribute to the plasma membrane binding, by interacting with phospholipids. Has affinity for phosphatidylserine, and phosphorylated phosphatidylinositols including PtdIns3P, PtdIns4P, PtdIns5P, PtdIns(3,5)P2 and PtdIns(3,4,5)P3.</text>
</comment>
<comment type="domain">
    <molecule>Junctophilin-2 N-terminal fragment</molecule>
    <text evidence="2">The bipartite nuclear localization signal (bNLS) and Ala-rich (alanine-rich; ARR) regions are involved in DNA-binding.</text>
</comment>
<comment type="PTM">
    <text evidence="2">Proteolytically cleaved by calpain in response to cardiac stress. The major cleavage site takes place at the C-terminus and leads to the release of the Junctophilin-2 N-terminal fragment chain (JP2NT).</text>
</comment>
<comment type="PTM">
    <text evidence="1">Phosphorylation on Ser-165, probably by PKC, affects RYR1-mediated calcium ion release, interaction with TRPC3, and skeletal muscle myotubule development.</text>
</comment>
<comment type="similarity">
    <text evidence="5">Belongs to the junctophilin family.</text>
</comment>
<proteinExistence type="evidence at protein level"/>
<sequence length="692" mass="74259">MSGGRFDFDDGGAYCGGWEGGKAHGHGLCTGPKGQGEYSGSWNFGFEVAGVYTWPSGNTFEGYWSQGKRHGLGIETKGRWLYKGEWTHGFKGRYGIRQSTNSGAKYEGTWNNGLQDGYGTETYADGGTYQGQFTNGMRHGYGVRQSVPYGMAVVVRSPLRTSLSSLRSEHSNGTVAPDSPAADGPTLPLPPVPRGGFALSLLATAEAARPPGLFTRGALLGRLRRSESRTSLGSQRSRLSFLKSELSSGASDAASTGSLAEGAEGPDDAAAPFDADIDATTTETYMGEWKNDKRSGFGVSERSSGLRYEGEWLDNLRHGYGRTTLPDGHREEGKYRHNVLVKGTKRRVLPLKSNKVRQKVEHGVEGAQRAAAIARQKAEIAASRTSHAKAKAEAAEQAALAANQESNIARTLAKELAPDFYQPGPEYQKRRLLQEILENSESLLEPRERGPGTGLPERPRESPQLHERETPQPEGGPPSPAGTPPQPKRPRPGSSKDGLLSPGAWNGEPGGEGSRPATPSDGAGRRSPARPASEHMAIEALQPPPAPSREPEVALYRGYHSYAVRTGPPEPPPLEDEPEPEPEVPRSDSEPPSPVSATVQEEESPAPRSRVPAKPATLEPKPIVPKAEPKAKARKTEARGLSKAGAKKKGRKEVAQEAEAEVEVEEVPNTVLICMVILLNIGLAILFVHLLT</sequence>
<organism>
    <name type="scientific">Rattus norvegicus</name>
    <name type="common">Rat</name>
    <dbReference type="NCBI Taxonomy" id="10116"/>
    <lineage>
        <taxon>Eukaryota</taxon>
        <taxon>Metazoa</taxon>
        <taxon>Chordata</taxon>
        <taxon>Craniata</taxon>
        <taxon>Vertebrata</taxon>
        <taxon>Euteleostomi</taxon>
        <taxon>Mammalia</taxon>
        <taxon>Eutheria</taxon>
        <taxon>Euarchontoglires</taxon>
        <taxon>Glires</taxon>
        <taxon>Rodentia</taxon>
        <taxon>Myomorpha</taxon>
        <taxon>Muroidea</taxon>
        <taxon>Muridae</taxon>
        <taxon>Murinae</taxon>
        <taxon>Rattus</taxon>
    </lineage>
</organism>
<feature type="chain" id="PRO_0000259403" description="Junctophilin-2">
    <location>
        <begin position="1"/>
        <end position="692"/>
    </location>
</feature>
<feature type="chain" id="PRO_0000446378" description="Junctophilin-2 N-terminal fragment" evidence="2">
    <location>
        <begin position="1"/>
        <end position="565"/>
    </location>
</feature>
<feature type="topological domain" description="Cytoplasmic" evidence="3">
    <location>
        <begin position="1"/>
        <end position="670"/>
    </location>
</feature>
<feature type="transmembrane region" description="Helical; Anchor for type IV membrane protein" evidence="3">
    <location>
        <begin position="671"/>
        <end position="691"/>
    </location>
</feature>
<feature type="repeat" description="MORN 1" evidence="3">
    <location>
        <begin position="14"/>
        <end position="36"/>
    </location>
</feature>
<feature type="repeat" description="MORN 2" evidence="3">
    <location>
        <begin position="38"/>
        <end position="59"/>
    </location>
</feature>
<feature type="repeat" description="MORN 3" evidence="3">
    <location>
        <begin position="60"/>
        <end position="79"/>
    </location>
</feature>
<feature type="repeat" description="MORN 4" evidence="3">
    <location>
        <begin position="82"/>
        <end position="104"/>
    </location>
</feature>
<feature type="repeat" description="MORN 5" evidence="3">
    <location>
        <begin position="106"/>
        <end position="128"/>
    </location>
</feature>
<feature type="repeat" description="MORN 6" evidence="3">
    <location>
        <begin position="129"/>
        <end position="151"/>
    </location>
</feature>
<feature type="repeat" description="MORN 7" evidence="3">
    <location>
        <begin position="285"/>
        <end position="307"/>
    </location>
</feature>
<feature type="repeat" description="MORN 8" evidence="3">
    <location>
        <begin position="308"/>
        <end position="330"/>
    </location>
</feature>
<feature type="region of interest" description="Disordered" evidence="4">
    <location>
        <begin position="164"/>
        <end position="190"/>
    </location>
</feature>
<feature type="region of interest" description="Disordered" evidence="4">
    <location>
        <begin position="246"/>
        <end position="273"/>
    </location>
</feature>
<feature type="region of interest" description="Disordered" evidence="4">
    <location>
        <begin position="439"/>
        <end position="661"/>
    </location>
</feature>
<feature type="short sequence motif" description="Bipartite nuclear localization signal" evidence="2">
    <location>
        <begin position="345"/>
        <end position="359"/>
    </location>
</feature>
<feature type="short sequence motif" description="Nuclear localization signal" evidence="2">
    <location>
        <begin position="488"/>
        <end position="492"/>
    </location>
</feature>
<feature type="compositionally biased region" description="Basic and acidic residues" evidence="4">
    <location>
        <begin position="457"/>
        <end position="471"/>
    </location>
</feature>
<feature type="compositionally biased region" description="Pro residues" evidence="4">
    <location>
        <begin position="474"/>
        <end position="487"/>
    </location>
</feature>
<feature type="compositionally biased region" description="Acidic residues" evidence="4">
    <location>
        <begin position="573"/>
        <end position="582"/>
    </location>
</feature>
<feature type="compositionally biased region" description="Basic and acidic residues" evidence="4">
    <location>
        <begin position="627"/>
        <end position="640"/>
    </location>
</feature>
<feature type="site" description="Cleavage; by calpain" evidence="2">
    <location>
        <begin position="155"/>
        <end position="156"/>
    </location>
</feature>
<feature type="site" description="Cleavage; by calpain" evidence="2">
    <location>
        <begin position="201"/>
        <end position="202"/>
    </location>
</feature>
<feature type="site" description="Cleavage; by calpain" evidence="2">
    <location>
        <begin position="565"/>
        <end position="566"/>
    </location>
</feature>
<feature type="modified residue" description="Phosphoserine" evidence="8">
    <location>
        <position position="162"/>
    </location>
</feature>
<feature type="modified residue" description="Phosphoserine" evidence="1">
    <location>
        <position position="165"/>
    </location>
</feature>
<feature type="modified residue" description="Phosphoserine" evidence="8">
    <location>
        <position position="440"/>
    </location>
</feature>
<feature type="modified residue" description="Phosphoserine" evidence="8">
    <location>
        <position position="442"/>
    </location>
</feature>
<feature type="modified residue" description="Phosphoserine" evidence="8">
    <location>
        <position position="462"/>
    </location>
</feature>
<feature type="modified residue" description="Phosphothreonine" evidence="2">
    <location>
        <position position="470"/>
    </location>
</feature>
<feature type="modified residue" description="Phosphoserine" evidence="8">
    <location>
        <position position="479"/>
    </location>
</feature>
<feature type="modified residue" description="Phosphothreonine" evidence="8">
    <location>
        <position position="483"/>
    </location>
</feature>
<feature type="modified residue" description="Phosphoserine" evidence="8">
    <location>
        <position position="527"/>
    </location>
</feature>
<feature type="modified residue" description="Phosphoserine" evidence="8">
    <location>
        <position position="533"/>
    </location>
</feature>
<feature type="modified residue" description="Phosphoserine" evidence="2">
    <location>
        <position position="589"/>
    </location>
</feature>
<feature type="modified residue" description="Phosphoserine" evidence="8">
    <location>
        <position position="593"/>
    </location>
</feature>
<feature type="modified residue" description="Phosphoserine" evidence="8">
    <location>
        <position position="604"/>
    </location>
</feature>
<feature type="modified residue" description="Phosphoserine" evidence="2">
    <location>
        <position position="609"/>
    </location>
</feature>
<accession>Q2PS20</accession>
<protein>
    <recommendedName>
        <fullName>Junctophilin-2</fullName>
        <shortName>JP-2</shortName>
    </recommendedName>
    <alternativeName>
        <fullName>Junctophilin type 2</fullName>
    </alternativeName>
    <component>
        <recommendedName>
            <fullName evidence="2">Junctophilin-2 N-terminal fragment</fullName>
            <shortName evidence="2">JP2NT</shortName>
        </recommendedName>
    </component>
</protein>
<reference evidence="6" key="1">
    <citation type="submission" date="2005-11" db="EMBL/GenBank/DDBJ databases">
        <title>The cloning of rat junctophilin-2 coding sequence.</title>
        <authorList>
            <person name="Bai Z."/>
            <person name="Geng X."/>
            <person name="Bi Q."/>
            <person name="Wang S."/>
        </authorList>
    </citation>
    <scope>NUCLEOTIDE SEQUENCE [MRNA]</scope>
    <source>
        <strain evidence="6">Sprague-Dawley</strain>
        <tissue evidence="6">Heart</tissue>
    </source>
</reference>
<reference key="2">
    <citation type="journal article" date="2012" name="Nat. Commun.">
        <title>Quantitative maps of protein phosphorylation sites across 14 different rat organs and tissues.</title>
        <authorList>
            <person name="Lundby A."/>
            <person name="Secher A."/>
            <person name="Lage K."/>
            <person name="Nordsborg N.B."/>
            <person name="Dmytriyev A."/>
            <person name="Lundby C."/>
            <person name="Olsen J.V."/>
        </authorList>
    </citation>
    <scope>PHOSPHORYLATION [LARGE SCALE ANALYSIS] AT SER-162; SER-440; SER-442; SER-462; SER-479; THR-483; SER-527; SER-533; SER-593 AND SER-604</scope>
    <scope>IDENTIFICATION BY MASS SPECTROMETRY [LARGE SCALE ANALYSIS]</scope>
</reference>